<keyword id="KW-0004">4Fe-4S</keyword>
<keyword id="KW-0028">Amino-acid biosynthesis</keyword>
<keyword id="KW-0100">Branched-chain amino acid biosynthesis</keyword>
<keyword id="KW-0408">Iron</keyword>
<keyword id="KW-0411">Iron-sulfur</keyword>
<keyword id="KW-0432">Leucine biosynthesis</keyword>
<keyword id="KW-0456">Lyase</keyword>
<keyword id="KW-0479">Metal-binding</keyword>
<protein>
    <recommendedName>
        <fullName evidence="1">3-isopropylmalate dehydratase large subunit</fullName>
        <ecNumber evidence="1">4.2.1.33</ecNumber>
    </recommendedName>
    <alternativeName>
        <fullName evidence="1">Alpha-IPM isomerase</fullName>
        <shortName evidence="1">IPMI</shortName>
    </alternativeName>
    <alternativeName>
        <fullName evidence="1">Isopropylmalate isomerase</fullName>
    </alternativeName>
</protein>
<comment type="function">
    <text evidence="1">Catalyzes the isomerization between 2-isopropylmalate and 3-isopropylmalate, via the formation of 2-isopropylmaleate.</text>
</comment>
<comment type="catalytic activity">
    <reaction evidence="1">
        <text>(2R,3S)-3-isopropylmalate = (2S)-2-isopropylmalate</text>
        <dbReference type="Rhea" id="RHEA:32287"/>
        <dbReference type="ChEBI" id="CHEBI:1178"/>
        <dbReference type="ChEBI" id="CHEBI:35121"/>
        <dbReference type="EC" id="4.2.1.33"/>
    </reaction>
</comment>
<comment type="cofactor">
    <cofactor evidence="1">
        <name>[4Fe-4S] cluster</name>
        <dbReference type="ChEBI" id="CHEBI:49883"/>
    </cofactor>
    <text evidence="1">Binds 1 [4Fe-4S] cluster per subunit.</text>
</comment>
<comment type="pathway">
    <text evidence="1">Amino-acid biosynthesis; L-leucine biosynthesis; L-leucine from 3-methyl-2-oxobutanoate: step 2/4.</text>
</comment>
<comment type="subunit">
    <text evidence="1">Heterodimer of LeuC and LeuD.</text>
</comment>
<comment type="similarity">
    <text evidence="1">Belongs to the aconitase/IPM isomerase family. LeuC type 1 subfamily.</text>
</comment>
<sequence length="469" mass="50948">MVKTLYEKLFDSHIVYEAEGETPILYINRHLIHEVTSPQAFDGLRVANRQVRQVNKTFGTMDHSISTQVRDVNKLEGQAKIQVLELDKNTKATGIKLFDITTKEQGIVHVMGPEQGLTLPGMTIVCGDSHTATHGAFGALAFGIGTSEVEHVLATQTLKQARAKSMKIEVRGKVASGITAKDIILAIIGKTTMAGGTGHVVEFCGEAIRDLSMEGRMTVCNMAIEMGAKAGLIAPDETTFAYLKDRPHAPKGKDWDDAVAYWKTLQSDDDAQFDTVVTLEAKDIAPQVTWGTNPGQVISVNETIPNPQEMADLVQRASAEKALHYIGLEAGTNLKEVKVDQVFIGSCTNSRIEDLRAAAAVMKGRKKADNVKRILVVPGSGLVKEQAEKEGLDKIFIAAGAEWRNPGCSMCLGMNDDRLGEWERCASTSNRNFEGRQGRNGRTHLVSPAMAAAAGMFGKFVDIREVALN</sequence>
<reference key="1">
    <citation type="journal article" date="2007" name="Genome Biol.">
        <title>Characterization and modeling of the Haemophilus influenzae core and supragenomes based on the complete genomic sequences of Rd and 12 clinical nontypeable strains.</title>
        <authorList>
            <person name="Hogg J.S."/>
            <person name="Hu F.Z."/>
            <person name="Janto B."/>
            <person name="Boissy R."/>
            <person name="Hayes J."/>
            <person name="Keefe R."/>
            <person name="Post J.C."/>
            <person name="Ehrlich G.D."/>
        </authorList>
    </citation>
    <scope>NUCLEOTIDE SEQUENCE [LARGE SCALE GENOMIC DNA]</scope>
    <source>
        <strain>PittEE</strain>
    </source>
</reference>
<dbReference type="EC" id="4.2.1.33" evidence="1"/>
<dbReference type="EMBL" id="CP000671">
    <property type="protein sequence ID" value="ABQ98734.1"/>
    <property type="molecule type" value="Genomic_DNA"/>
</dbReference>
<dbReference type="SMR" id="A5UD83"/>
<dbReference type="KEGG" id="hip:CGSHiEE_07025"/>
<dbReference type="HOGENOM" id="CLU_006714_3_4_6"/>
<dbReference type="UniPathway" id="UPA00048">
    <property type="reaction ID" value="UER00071"/>
</dbReference>
<dbReference type="GO" id="GO:0003861">
    <property type="term" value="F:3-isopropylmalate dehydratase activity"/>
    <property type="evidence" value="ECO:0007669"/>
    <property type="project" value="UniProtKB-UniRule"/>
</dbReference>
<dbReference type="GO" id="GO:0051539">
    <property type="term" value="F:4 iron, 4 sulfur cluster binding"/>
    <property type="evidence" value="ECO:0007669"/>
    <property type="project" value="UniProtKB-KW"/>
</dbReference>
<dbReference type="GO" id="GO:0046872">
    <property type="term" value="F:metal ion binding"/>
    <property type="evidence" value="ECO:0007669"/>
    <property type="project" value="UniProtKB-KW"/>
</dbReference>
<dbReference type="GO" id="GO:0009098">
    <property type="term" value="P:L-leucine biosynthetic process"/>
    <property type="evidence" value="ECO:0007669"/>
    <property type="project" value="UniProtKB-UniRule"/>
</dbReference>
<dbReference type="CDD" id="cd01583">
    <property type="entry name" value="IPMI"/>
    <property type="match status" value="1"/>
</dbReference>
<dbReference type="FunFam" id="3.30.499.10:FF:000006">
    <property type="entry name" value="3-isopropylmalate dehydratase large subunit"/>
    <property type="match status" value="1"/>
</dbReference>
<dbReference type="FunFam" id="3.30.499.10:FF:000007">
    <property type="entry name" value="3-isopropylmalate dehydratase large subunit"/>
    <property type="match status" value="1"/>
</dbReference>
<dbReference type="Gene3D" id="3.30.499.10">
    <property type="entry name" value="Aconitase, domain 3"/>
    <property type="match status" value="2"/>
</dbReference>
<dbReference type="HAMAP" id="MF_01026">
    <property type="entry name" value="LeuC_type1"/>
    <property type="match status" value="1"/>
</dbReference>
<dbReference type="InterPro" id="IPR004430">
    <property type="entry name" value="3-IsopropMal_deHydase_lsu"/>
</dbReference>
<dbReference type="InterPro" id="IPR015931">
    <property type="entry name" value="Acnase/IPM_dHydase_lsu_aba_1/3"/>
</dbReference>
<dbReference type="InterPro" id="IPR001030">
    <property type="entry name" value="Acoase/IPM_deHydtase_lsu_aba"/>
</dbReference>
<dbReference type="InterPro" id="IPR018136">
    <property type="entry name" value="Aconitase_4Fe-4S_BS"/>
</dbReference>
<dbReference type="InterPro" id="IPR036008">
    <property type="entry name" value="Aconitase_4Fe-4S_dom"/>
</dbReference>
<dbReference type="InterPro" id="IPR050067">
    <property type="entry name" value="IPM_dehydratase_rel_enz"/>
</dbReference>
<dbReference type="InterPro" id="IPR033941">
    <property type="entry name" value="IPMI_cat"/>
</dbReference>
<dbReference type="NCBIfam" id="TIGR00170">
    <property type="entry name" value="leuC"/>
    <property type="match status" value="1"/>
</dbReference>
<dbReference type="NCBIfam" id="NF004016">
    <property type="entry name" value="PRK05478.1"/>
    <property type="match status" value="1"/>
</dbReference>
<dbReference type="NCBIfam" id="NF009116">
    <property type="entry name" value="PRK12466.1"/>
    <property type="match status" value="1"/>
</dbReference>
<dbReference type="PANTHER" id="PTHR43822:SF9">
    <property type="entry name" value="3-ISOPROPYLMALATE DEHYDRATASE"/>
    <property type="match status" value="1"/>
</dbReference>
<dbReference type="PANTHER" id="PTHR43822">
    <property type="entry name" value="HOMOACONITASE, MITOCHONDRIAL-RELATED"/>
    <property type="match status" value="1"/>
</dbReference>
<dbReference type="Pfam" id="PF00330">
    <property type="entry name" value="Aconitase"/>
    <property type="match status" value="1"/>
</dbReference>
<dbReference type="PRINTS" id="PR00415">
    <property type="entry name" value="ACONITASE"/>
</dbReference>
<dbReference type="SUPFAM" id="SSF53732">
    <property type="entry name" value="Aconitase iron-sulfur domain"/>
    <property type="match status" value="1"/>
</dbReference>
<dbReference type="PROSITE" id="PS00450">
    <property type="entry name" value="ACONITASE_1"/>
    <property type="match status" value="1"/>
</dbReference>
<dbReference type="PROSITE" id="PS01244">
    <property type="entry name" value="ACONITASE_2"/>
    <property type="match status" value="1"/>
</dbReference>
<organism>
    <name type="scientific">Haemophilus influenzae (strain PittEE)</name>
    <dbReference type="NCBI Taxonomy" id="374930"/>
    <lineage>
        <taxon>Bacteria</taxon>
        <taxon>Pseudomonadati</taxon>
        <taxon>Pseudomonadota</taxon>
        <taxon>Gammaproteobacteria</taxon>
        <taxon>Pasteurellales</taxon>
        <taxon>Pasteurellaceae</taxon>
        <taxon>Haemophilus</taxon>
    </lineage>
</organism>
<gene>
    <name evidence="1" type="primary">leuC</name>
    <name type="ordered locus">CGSHiEE_07025</name>
</gene>
<accession>A5UD83</accession>
<proteinExistence type="inferred from homology"/>
<name>LEUC_HAEIE</name>
<feature type="chain" id="PRO_1000063557" description="3-isopropylmalate dehydratase large subunit">
    <location>
        <begin position="1"/>
        <end position="469"/>
    </location>
</feature>
<feature type="binding site" evidence="1">
    <location>
        <position position="347"/>
    </location>
    <ligand>
        <name>[4Fe-4S] cluster</name>
        <dbReference type="ChEBI" id="CHEBI:49883"/>
    </ligand>
</feature>
<feature type="binding site" evidence="1">
    <location>
        <position position="408"/>
    </location>
    <ligand>
        <name>[4Fe-4S] cluster</name>
        <dbReference type="ChEBI" id="CHEBI:49883"/>
    </ligand>
</feature>
<feature type="binding site" evidence="1">
    <location>
        <position position="411"/>
    </location>
    <ligand>
        <name>[4Fe-4S] cluster</name>
        <dbReference type="ChEBI" id="CHEBI:49883"/>
    </ligand>
</feature>
<evidence type="ECO:0000255" key="1">
    <source>
        <dbReference type="HAMAP-Rule" id="MF_01026"/>
    </source>
</evidence>